<sequence>MKENIHPTTFKAKMTCACGYEAEALSTKGEVVNVEICSQCHPFYTGKQRFVDTAGRIDRFRKKYAKFGEGK</sequence>
<protein>
    <recommendedName>
        <fullName evidence="1">Large ribosomal subunit protein bL31</fullName>
    </recommendedName>
    <alternativeName>
        <fullName evidence="2">50S ribosomal protein L31</fullName>
    </alternativeName>
</protein>
<proteinExistence type="inferred from homology"/>
<reference key="1">
    <citation type="submission" date="2008-10" db="EMBL/GenBank/DDBJ databases">
        <title>Complete sequence of Desulfovibrio vulgaris str. 'Miyazaki F'.</title>
        <authorList>
            <person name="Lucas S."/>
            <person name="Copeland A."/>
            <person name="Lapidus A."/>
            <person name="Glavina del Rio T."/>
            <person name="Dalin E."/>
            <person name="Tice H."/>
            <person name="Bruce D."/>
            <person name="Goodwin L."/>
            <person name="Pitluck S."/>
            <person name="Sims D."/>
            <person name="Brettin T."/>
            <person name="Detter J.C."/>
            <person name="Han C."/>
            <person name="Larimer F."/>
            <person name="Land M."/>
            <person name="Hauser L."/>
            <person name="Kyrpides N."/>
            <person name="Mikhailova N."/>
            <person name="Hazen T.C."/>
            <person name="Richardson P."/>
        </authorList>
    </citation>
    <scope>NUCLEOTIDE SEQUENCE [LARGE SCALE GENOMIC DNA]</scope>
    <source>
        <strain>DSM 19637 / Miyazaki F</strain>
    </source>
</reference>
<keyword id="KW-0479">Metal-binding</keyword>
<keyword id="KW-0687">Ribonucleoprotein</keyword>
<keyword id="KW-0689">Ribosomal protein</keyword>
<keyword id="KW-0694">RNA-binding</keyword>
<keyword id="KW-0699">rRNA-binding</keyword>
<keyword id="KW-0862">Zinc</keyword>
<organism>
    <name type="scientific">Nitratidesulfovibrio vulgaris (strain DSM 19637 / Miyazaki F)</name>
    <name type="common">Desulfovibrio vulgaris</name>
    <dbReference type="NCBI Taxonomy" id="883"/>
    <lineage>
        <taxon>Bacteria</taxon>
        <taxon>Pseudomonadati</taxon>
        <taxon>Thermodesulfobacteriota</taxon>
        <taxon>Desulfovibrionia</taxon>
        <taxon>Desulfovibrionales</taxon>
        <taxon>Desulfovibrionaceae</taxon>
        <taxon>Nitratidesulfovibrio</taxon>
    </lineage>
</organism>
<gene>
    <name evidence="1" type="primary">rpmE</name>
    <name type="ordered locus">DvMF_1442</name>
</gene>
<accession>B8DRV3</accession>
<feature type="chain" id="PRO_1000126607" description="Large ribosomal subunit protein bL31">
    <location>
        <begin position="1"/>
        <end position="71"/>
    </location>
</feature>
<feature type="binding site" evidence="1">
    <location>
        <position position="16"/>
    </location>
    <ligand>
        <name>Zn(2+)</name>
        <dbReference type="ChEBI" id="CHEBI:29105"/>
    </ligand>
</feature>
<feature type="binding site" evidence="1">
    <location>
        <position position="18"/>
    </location>
    <ligand>
        <name>Zn(2+)</name>
        <dbReference type="ChEBI" id="CHEBI:29105"/>
    </ligand>
</feature>
<feature type="binding site" evidence="1">
    <location>
        <position position="37"/>
    </location>
    <ligand>
        <name>Zn(2+)</name>
        <dbReference type="ChEBI" id="CHEBI:29105"/>
    </ligand>
</feature>
<feature type="binding site" evidence="1">
    <location>
        <position position="40"/>
    </location>
    <ligand>
        <name>Zn(2+)</name>
        <dbReference type="ChEBI" id="CHEBI:29105"/>
    </ligand>
</feature>
<comment type="function">
    <text evidence="1">Binds the 23S rRNA.</text>
</comment>
<comment type="cofactor">
    <cofactor evidence="1">
        <name>Zn(2+)</name>
        <dbReference type="ChEBI" id="CHEBI:29105"/>
    </cofactor>
    <text evidence="1">Binds 1 zinc ion per subunit.</text>
</comment>
<comment type="subunit">
    <text evidence="1">Part of the 50S ribosomal subunit.</text>
</comment>
<comment type="similarity">
    <text evidence="1">Belongs to the bacterial ribosomal protein bL31 family. Type A subfamily.</text>
</comment>
<dbReference type="EMBL" id="CP001197">
    <property type="protein sequence ID" value="ACL08390.1"/>
    <property type="molecule type" value="Genomic_DNA"/>
</dbReference>
<dbReference type="SMR" id="B8DRV3"/>
<dbReference type="STRING" id="883.DvMF_1442"/>
<dbReference type="KEGG" id="dvm:DvMF_1442"/>
<dbReference type="eggNOG" id="COG0254">
    <property type="taxonomic scope" value="Bacteria"/>
</dbReference>
<dbReference type="HOGENOM" id="CLU_114306_4_0_7"/>
<dbReference type="OrthoDB" id="9803251at2"/>
<dbReference type="GO" id="GO:1990904">
    <property type="term" value="C:ribonucleoprotein complex"/>
    <property type="evidence" value="ECO:0007669"/>
    <property type="project" value="UniProtKB-KW"/>
</dbReference>
<dbReference type="GO" id="GO:0005840">
    <property type="term" value="C:ribosome"/>
    <property type="evidence" value="ECO:0007669"/>
    <property type="project" value="UniProtKB-KW"/>
</dbReference>
<dbReference type="GO" id="GO:0046872">
    <property type="term" value="F:metal ion binding"/>
    <property type="evidence" value="ECO:0007669"/>
    <property type="project" value="UniProtKB-KW"/>
</dbReference>
<dbReference type="GO" id="GO:0019843">
    <property type="term" value="F:rRNA binding"/>
    <property type="evidence" value="ECO:0007669"/>
    <property type="project" value="UniProtKB-KW"/>
</dbReference>
<dbReference type="GO" id="GO:0003735">
    <property type="term" value="F:structural constituent of ribosome"/>
    <property type="evidence" value="ECO:0007669"/>
    <property type="project" value="InterPro"/>
</dbReference>
<dbReference type="GO" id="GO:0006412">
    <property type="term" value="P:translation"/>
    <property type="evidence" value="ECO:0007669"/>
    <property type="project" value="UniProtKB-UniRule"/>
</dbReference>
<dbReference type="Gene3D" id="4.10.830.30">
    <property type="entry name" value="Ribosomal protein L31"/>
    <property type="match status" value="1"/>
</dbReference>
<dbReference type="HAMAP" id="MF_00501">
    <property type="entry name" value="Ribosomal_bL31_1"/>
    <property type="match status" value="1"/>
</dbReference>
<dbReference type="InterPro" id="IPR034704">
    <property type="entry name" value="Ribosomal_bL28/bL31-like_sf"/>
</dbReference>
<dbReference type="InterPro" id="IPR002150">
    <property type="entry name" value="Ribosomal_bL31"/>
</dbReference>
<dbReference type="InterPro" id="IPR027491">
    <property type="entry name" value="Ribosomal_bL31_A"/>
</dbReference>
<dbReference type="InterPro" id="IPR042105">
    <property type="entry name" value="Ribosomal_bL31_sf"/>
</dbReference>
<dbReference type="NCBIfam" id="TIGR00105">
    <property type="entry name" value="L31"/>
    <property type="match status" value="1"/>
</dbReference>
<dbReference type="NCBIfam" id="NF000612">
    <property type="entry name" value="PRK00019.1"/>
    <property type="match status" value="1"/>
</dbReference>
<dbReference type="NCBIfam" id="NF001809">
    <property type="entry name" value="PRK00528.1"/>
    <property type="match status" value="1"/>
</dbReference>
<dbReference type="PANTHER" id="PTHR33280">
    <property type="entry name" value="50S RIBOSOMAL PROTEIN L31, CHLOROPLASTIC"/>
    <property type="match status" value="1"/>
</dbReference>
<dbReference type="PANTHER" id="PTHR33280:SF1">
    <property type="entry name" value="LARGE RIBOSOMAL SUBUNIT PROTEIN BL31C"/>
    <property type="match status" value="1"/>
</dbReference>
<dbReference type="Pfam" id="PF01197">
    <property type="entry name" value="Ribosomal_L31"/>
    <property type="match status" value="1"/>
</dbReference>
<dbReference type="PRINTS" id="PR01249">
    <property type="entry name" value="RIBOSOMALL31"/>
</dbReference>
<dbReference type="SUPFAM" id="SSF143800">
    <property type="entry name" value="L28p-like"/>
    <property type="match status" value="1"/>
</dbReference>
<dbReference type="PROSITE" id="PS01143">
    <property type="entry name" value="RIBOSOMAL_L31"/>
    <property type="match status" value="1"/>
</dbReference>
<name>RL31_NITV9</name>
<evidence type="ECO:0000255" key="1">
    <source>
        <dbReference type="HAMAP-Rule" id="MF_00501"/>
    </source>
</evidence>
<evidence type="ECO:0000305" key="2"/>